<comment type="function">
    <text evidence="1">Acts as a processive, ATP-dependent zinc metallopeptidase for both cytoplasmic and membrane proteins. Plays a role in the quality control of integral membrane proteins.</text>
</comment>
<comment type="cofactor">
    <cofactor evidence="1">
        <name>Zn(2+)</name>
        <dbReference type="ChEBI" id="CHEBI:29105"/>
    </cofactor>
    <text evidence="1">Binds 1 zinc ion per subunit.</text>
</comment>
<comment type="subunit">
    <text evidence="1">Homohexamer.</text>
</comment>
<comment type="subcellular location">
    <subcellularLocation>
        <location evidence="1">Cell membrane</location>
        <topology evidence="1">Multi-pass membrane protein</topology>
        <orientation evidence="1">Cytoplasmic side</orientation>
    </subcellularLocation>
</comment>
<comment type="similarity">
    <text evidence="1">In the central section; belongs to the AAA ATPase family.</text>
</comment>
<comment type="similarity">
    <text evidence="1">In the C-terminal section; belongs to the peptidase M41 family.</text>
</comment>
<name>FTSH_MALP2</name>
<protein>
    <recommendedName>
        <fullName evidence="1">ATP-dependent zinc metalloprotease FtsH</fullName>
        <ecNumber evidence="1">3.4.24.-</ecNumber>
    </recommendedName>
</protein>
<accession>Q8EUA6</accession>
<gene>
    <name evidence="1" type="primary">ftsH</name>
    <name type="ordered locus">MYPE10250</name>
</gene>
<sequence length="822" mass="90393">MEFNKLELLIIRALKLNTNSNKKNSFYNKFLNLRNKVLNIQKNSLDQPSDAPSNNKKRNLDQPDNPNQKEPGKARKIIWSFIIIILVLGVLALIILSGFSFSATSLNAASFTENGTSSFKITTNTNQTRTIGGAPSTIYQRDSTLYVIYIENSFSGYYYSAIITDISVSNNTASVGNGSNTTGGSTSNLQKGLQIANLLVDGSGNVYKNKDNNGSTTSGTTTFSLNSNLTSAMKLQGWSSNQSMSLPTSYSFYTAASLVLSILPFILLIGIIYYSMRKMGQAGGGQDNVFSIGKSQAKLAKSTVLFSDVAGIEEEKEELIEIVDYLKRPDRYAAMGARVPKGVILYGPPGTGKTLLAKAVAGEAKVPFFQVSGSAFEDMLVGVGAKRVRDLFNKAVKSAPAIIFIDEIDSVGSKRGKFETTAGSLADQTLNQLLAEMDGFNTKTGVIVMAATNRLDVLDDALLRPGRFDRHIQVNLPDIKERVAILKIHSRNKNISETVDLEDIARRTPGFSGAQLENVLNEATLLAVRRNKKSIYTEELDEAIDRVIAGPAKKTRVISLEEKRQIAFHEAGHAIVGMYTKGSEVVEKITIIPRGQAAGYTLSVPEIQELSIQKKSDLLGMVAGLLGGRASEEINFGKEFISTGAANDLYKATNIVRAMVTQFGMSPNVGLAQYYPSEGTVNPYQSKNFSESTSQLIDKEIERIFKERYEYAYKIIKEHNKEVELIVESLLLLETIVKPQIDFIHKYKQLPKEALEKKKELEEKKKAEDLIRKAKKESEASSKEEKEMDVEKKVQKPSASSTEPTSKPKKAPSKESSSDKKK</sequence>
<feature type="chain" id="PRO_0000400361" description="ATP-dependent zinc metalloprotease FtsH">
    <location>
        <begin position="1"/>
        <end position="822"/>
    </location>
</feature>
<feature type="topological domain" description="Cytoplasmic" evidence="1">
    <location>
        <begin position="1"/>
        <end position="76"/>
    </location>
</feature>
<feature type="transmembrane region" description="Helical" evidence="1">
    <location>
        <begin position="77"/>
        <end position="97"/>
    </location>
</feature>
<feature type="topological domain" description="Extracellular" evidence="1">
    <location>
        <begin position="98"/>
        <end position="251"/>
    </location>
</feature>
<feature type="transmembrane region" description="Helical" evidence="1">
    <location>
        <begin position="252"/>
        <end position="272"/>
    </location>
</feature>
<feature type="topological domain" description="Cytoplasmic" evidence="1">
    <location>
        <begin position="273"/>
        <end position="822"/>
    </location>
</feature>
<feature type="region of interest" description="Disordered" evidence="2">
    <location>
        <begin position="44"/>
        <end position="71"/>
    </location>
</feature>
<feature type="region of interest" description="Disordered" evidence="2">
    <location>
        <begin position="758"/>
        <end position="822"/>
    </location>
</feature>
<feature type="compositionally biased region" description="Polar residues" evidence="2">
    <location>
        <begin position="44"/>
        <end position="54"/>
    </location>
</feature>
<feature type="compositionally biased region" description="Basic and acidic residues" evidence="2">
    <location>
        <begin position="758"/>
        <end position="794"/>
    </location>
</feature>
<feature type="compositionally biased region" description="Low complexity" evidence="2">
    <location>
        <begin position="796"/>
        <end position="805"/>
    </location>
</feature>
<feature type="compositionally biased region" description="Basic and acidic residues" evidence="2">
    <location>
        <begin position="812"/>
        <end position="822"/>
    </location>
</feature>
<feature type="active site" evidence="1">
    <location>
        <position position="570"/>
    </location>
</feature>
<feature type="binding site" evidence="1">
    <location>
        <begin position="347"/>
        <end position="354"/>
    </location>
    <ligand>
        <name>ATP</name>
        <dbReference type="ChEBI" id="CHEBI:30616"/>
    </ligand>
</feature>
<feature type="binding site" evidence="1">
    <location>
        <position position="569"/>
    </location>
    <ligand>
        <name>Zn(2+)</name>
        <dbReference type="ChEBI" id="CHEBI:29105"/>
        <note>catalytic</note>
    </ligand>
</feature>
<feature type="binding site" evidence="1">
    <location>
        <position position="573"/>
    </location>
    <ligand>
        <name>Zn(2+)</name>
        <dbReference type="ChEBI" id="CHEBI:29105"/>
        <note>catalytic</note>
    </ligand>
</feature>
<feature type="binding site" evidence="1">
    <location>
        <position position="648"/>
    </location>
    <ligand>
        <name>Zn(2+)</name>
        <dbReference type="ChEBI" id="CHEBI:29105"/>
        <note>catalytic</note>
    </ligand>
</feature>
<keyword id="KW-0067">ATP-binding</keyword>
<keyword id="KW-1003">Cell membrane</keyword>
<keyword id="KW-0378">Hydrolase</keyword>
<keyword id="KW-0472">Membrane</keyword>
<keyword id="KW-0479">Metal-binding</keyword>
<keyword id="KW-0482">Metalloprotease</keyword>
<keyword id="KW-0547">Nucleotide-binding</keyword>
<keyword id="KW-0645">Protease</keyword>
<keyword id="KW-1185">Reference proteome</keyword>
<keyword id="KW-0812">Transmembrane</keyword>
<keyword id="KW-1133">Transmembrane helix</keyword>
<keyword id="KW-0862">Zinc</keyword>
<proteinExistence type="inferred from homology"/>
<evidence type="ECO:0000255" key="1">
    <source>
        <dbReference type="HAMAP-Rule" id="MF_01458"/>
    </source>
</evidence>
<evidence type="ECO:0000256" key="2">
    <source>
        <dbReference type="SAM" id="MobiDB-lite"/>
    </source>
</evidence>
<reference key="1">
    <citation type="journal article" date="2002" name="Nucleic Acids Res.">
        <title>The complete genomic sequence of Mycoplasma penetrans, an intracellular bacterial pathogen in humans.</title>
        <authorList>
            <person name="Sasaki Y."/>
            <person name="Ishikawa J."/>
            <person name="Yamashita A."/>
            <person name="Oshima K."/>
            <person name="Kenri T."/>
            <person name="Furuya K."/>
            <person name="Yoshino C."/>
            <person name="Horino A."/>
            <person name="Shiba T."/>
            <person name="Sasaki T."/>
            <person name="Hattori M."/>
        </authorList>
    </citation>
    <scope>NUCLEOTIDE SEQUENCE [LARGE SCALE GENOMIC DNA]</scope>
    <source>
        <strain>HF-2</strain>
    </source>
</reference>
<dbReference type="EC" id="3.4.24.-" evidence="1"/>
<dbReference type="EMBL" id="BA000026">
    <property type="protein sequence ID" value="BAC44810.1"/>
    <property type="molecule type" value="Genomic_DNA"/>
</dbReference>
<dbReference type="RefSeq" id="WP_011077838.1">
    <property type="nucleotide sequence ID" value="NC_004432.1"/>
</dbReference>
<dbReference type="SMR" id="Q8EUA6"/>
<dbReference type="FunCoup" id="Q8EUA6">
    <property type="interactions" value="243"/>
</dbReference>
<dbReference type="STRING" id="272633.gene:10732144"/>
<dbReference type="KEGG" id="mpe:MYPE10250"/>
<dbReference type="eggNOG" id="COG0465">
    <property type="taxonomic scope" value="Bacteria"/>
</dbReference>
<dbReference type="HOGENOM" id="CLU_000688_16_2_14"/>
<dbReference type="InParanoid" id="Q8EUA6"/>
<dbReference type="Proteomes" id="UP000002522">
    <property type="component" value="Chromosome"/>
</dbReference>
<dbReference type="GO" id="GO:0005886">
    <property type="term" value="C:plasma membrane"/>
    <property type="evidence" value="ECO:0007669"/>
    <property type="project" value="UniProtKB-SubCell"/>
</dbReference>
<dbReference type="GO" id="GO:0005524">
    <property type="term" value="F:ATP binding"/>
    <property type="evidence" value="ECO:0007669"/>
    <property type="project" value="UniProtKB-UniRule"/>
</dbReference>
<dbReference type="GO" id="GO:0016887">
    <property type="term" value="F:ATP hydrolysis activity"/>
    <property type="evidence" value="ECO:0007669"/>
    <property type="project" value="UniProtKB-UniRule"/>
</dbReference>
<dbReference type="GO" id="GO:0004176">
    <property type="term" value="F:ATP-dependent peptidase activity"/>
    <property type="evidence" value="ECO:0007669"/>
    <property type="project" value="InterPro"/>
</dbReference>
<dbReference type="GO" id="GO:0004222">
    <property type="term" value="F:metalloendopeptidase activity"/>
    <property type="evidence" value="ECO:0007669"/>
    <property type="project" value="InterPro"/>
</dbReference>
<dbReference type="GO" id="GO:0008270">
    <property type="term" value="F:zinc ion binding"/>
    <property type="evidence" value="ECO:0007669"/>
    <property type="project" value="UniProtKB-UniRule"/>
</dbReference>
<dbReference type="GO" id="GO:0030163">
    <property type="term" value="P:protein catabolic process"/>
    <property type="evidence" value="ECO:0007669"/>
    <property type="project" value="UniProtKB-UniRule"/>
</dbReference>
<dbReference type="GO" id="GO:0006508">
    <property type="term" value="P:proteolysis"/>
    <property type="evidence" value="ECO:0007669"/>
    <property type="project" value="UniProtKB-KW"/>
</dbReference>
<dbReference type="CDD" id="cd19501">
    <property type="entry name" value="RecA-like_FtsH"/>
    <property type="match status" value="1"/>
</dbReference>
<dbReference type="FunFam" id="1.10.8.60:FF:000001">
    <property type="entry name" value="ATP-dependent zinc metalloprotease FtsH"/>
    <property type="match status" value="1"/>
</dbReference>
<dbReference type="FunFam" id="1.20.58.760:FF:000001">
    <property type="entry name" value="ATP-dependent zinc metalloprotease FtsH"/>
    <property type="match status" value="1"/>
</dbReference>
<dbReference type="FunFam" id="3.40.50.300:FF:000352">
    <property type="entry name" value="ATP-dependent zinc metalloprotease FTSH 7, chloroplastic"/>
    <property type="match status" value="1"/>
</dbReference>
<dbReference type="Gene3D" id="1.10.8.60">
    <property type="match status" value="1"/>
</dbReference>
<dbReference type="Gene3D" id="3.40.50.300">
    <property type="entry name" value="P-loop containing nucleotide triphosphate hydrolases"/>
    <property type="match status" value="1"/>
</dbReference>
<dbReference type="Gene3D" id="1.20.58.760">
    <property type="entry name" value="Peptidase M41"/>
    <property type="match status" value="1"/>
</dbReference>
<dbReference type="HAMAP" id="MF_01458">
    <property type="entry name" value="FtsH"/>
    <property type="match status" value="1"/>
</dbReference>
<dbReference type="InterPro" id="IPR003593">
    <property type="entry name" value="AAA+_ATPase"/>
</dbReference>
<dbReference type="InterPro" id="IPR041569">
    <property type="entry name" value="AAA_lid_3"/>
</dbReference>
<dbReference type="InterPro" id="IPR050928">
    <property type="entry name" value="ATP-dep_Zn_Metalloprotease"/>
</dbReference>
<dbReference type="InterPro" id="IPR003959">
    <property type="entry name" value="ATPase_AAA_core"/>
</dbReference>
<dbReference type="InterPro" id="IPR003960">
    <property type="entry name" value="ATPase_AAA_CS"/>
</dbReference>
<dbReference type="InterPro" id="IPR005936">
    <property type="entry name" value="FtsH"/>
</dbReference>
<dbReference type="InterPro" id="IPR027417">
    <property type="entry name" value="P-loop_NTPase"/>
</dbReference>
<dbReference type="InterPro" id="IPR000642">
    <property type="entry name" value="Peptidase_M41"/>
</dbReference>
<dbReference type="InterPro" id="IPR037219">
    <property type="entry name" value="Peptidase_M41-like"/>
</dbReference>
<dbReference type="NCBIfam" id="TIGR01241">
    <property type="entry name" value="FtsH_fam"/>
    <property type="match status" value="1"/>
</dbReference>
<dbReference type="PANTHER" id="PTHR43655:SF2">
    <property type="entry name" value="AFG3 LIKE MATRIX AAA PEPTIDASE SUBUNIT 2, ISOFORM A"/>
    <property type="match status" value="1"/>
</dbReference>
<dbReference type="PANTHER" id="PTHR43655">
    <property type="entry name" value="ATP-DEPENDENT PROTEASE"/>
    <property type="match status" value="1"/>
</dbReference>
<dbReference type="Pfam" id="PF00004">
    <property type="entry name" value="AAA"/>
    <property type="match status" value="1"/>
</dbReference>
<dbReference type="Pfam" id="PF17862">
    <property type="entry name" value="AAA_lid_3"/>
    <property type="match status" value="1"/>
</dbReference>
<dbReference type="Pfam" id="PF01434">
    <property type="entry name" value="Peptidase_M41"/>
    <property type="match status" value="1"/>
</dbReference>
<dbReference type="SMART" id="SM00382">
    <property type="entry name" value="AAA"/>
    <property type="match status" value="1"/>
</dbReference>
<dbReference type="SUPFAM" id="SSF140990">
    <property type="entry name" value="FtsH protease domain-like"/>
    <property type="match status" value="1"/>
</dbReference>
<dbReference type="SUPFAM" id="SSF52540">
    <property type="entry name" value="P-loop containing nucleoside triphosphate hydrolases"/>
    <property type="match status" value="1"/>
</dbReference>
<dbReference type="PROSITE" id="PS00674">
    <property type="entry name" value="AAA"/>
    <property type="match status" value="1"/>
</dbReference>
<organism>
    <name type="scientific">Malacoplasma penetrans (strain HF-2)</name>
    <name type="common">Mycoplasma penetrans</name>
    <dbReference type="NCBI Taxonomy" id="272633"/>
    <lineage>
        <taxon>Bacteria</taxon>
        <taxon>Bacillati</taxon>
        <taxon>Mycoplasmatota</taxon>
        <taxon>Mycoplasmoidales</taxon>
        <taxon>Mycoplasmoidaceae</taxon>
        <taxon>Malacoplasma</taxon>
    </lineage>
</organism>